<evidence type="ECO:0000250" key="1">
    <source>
        <dbReference type="UniProtKB" id="A0A0B4JDK1"/>
    </source>
</evidence>
<evidence type="ECO:0000250" key="2">
    <source>
        <dbReference type="UniProtKB" id="Q9C7F7"/>
    </source>
</evidence>
<evidence type="ECO:0000255" key="3"/>
<evidence type="ECO:0000255" key="4">
    <source>
        <dbReference type="PROSITE-ProRule" id="PRU00498"/>
    </source>
</evidence>
<evidence type="ECO:0000256" key="5">
    <source>
        <dbReference type="SAM" id="MobiDB-lite"/>
    </source>
</evidence>
<evidence type="ECO:0000269" key="6">
    <source>
    </source>
</evidence>
<evidence type="ECO:0000303" key="7">
    <source>
    </source>
</evidence>
<evidence type="ECO:0000305" key="8"/>
<evidence type="ECO:0000312" key="9">
    <source>
        <dbReference type="Araport" id="AT1G62790"/>
    </source>
</evidence>
<evidence type="ECO:0000312" key="10">
    <source>
        <dbReference type="EMBL" id="AAF19539.1"/>
    </source>
</evidence>
<accession>Q6NLF7</accession>
<accession>Q9SI70</accession>
<dbReference type="EMBL" id="AC007190">
    <property type="protein sequence ID" value="AAF19539.1"/>
    <property type="status" value="ALT_SEQ"/>
    <property type="molecule type" value="Genomic_DNA"/>
</dbReference>
<dbReference type="EMBL" id="CP002684">
    <property type="protein sequence ID" value="AEE34004.1"/>
    <property type="molecule type" value="Genomic_DNA"/>
</dbReference>
<dbReference type="EMBL" id="BT011764">
    <property type="protein sequence ID" value="AAS65935.1"/>
    <property type="molecule type" value="mRNA"/>
</dbReference>
<dbReference type="EMBL" id="BT012377">
    <property type="protein sequence ID" value="AAS88767.1"/>
    <property type="molecule type" value="mRNA"/>
</dbReference>
<dbReference type="EMBL" id="AK229732">
    <property type="protein sequence ID" value="BAF01570.1"/>
    <property type="molecule type" value="mRNA"/>
</dbReference>
<dbReference type="RefSeq" id="NP_176467.1">
    <property type="nucleotide sequence ID" value="NM_104957.5"/>
</dbReference>
<dbReference type="SMR" id="Q6NLF7"/>
<dbReference type="FunCoup" id="Q6NLF7">
    <property type="interactions" value="129"/>
</dbReference>
<dbReference type="STRING" id="3702.Q6NLF7"/>
<dbReference type="GlyCosmos" id="Q6NLF7">
    <property type="glycosylation" value="3 sites, No reported glycans"/>
</dbReference>
<dbReference type="GlyGen" id="Q6NLF7">
    <property type="glycosylation" value="3 sites"/>
</dbReference>
<dbReference type="PaxDb" id="3702-AT1G62790.1"/>
<dbReference type="ProteomicsDB" id="183027"/>
<dbReference type="EnsemblPlants" id="AT1G62790.1">
    <property type="protein sequence ID" value="AT1G62790.1"/>
    <property type="gene ID" value="AT1G62790"/>
</dbReference>
<dbReference type="GeneID" id="842578"/>
<dbReference type="Gramene" id="AT1G62790.1">
    <property type="protein sequence ID" value="AT1G62790.1"/>
    <property type="gene ID" value="AT1G62790"/>
</dbReference>
<dbReference type="KEGG" id="ath:AT1G62790"/>
<dbReference type="Araport" id="AT1G62790"/>
<dbReference type="TAIR" id="AT1G62790">
    <property type="gene designation" value="LTPG7"/>
</dbReference>
<dbReference type="eggNOG" id="ENOG502S7AI">
    <property type="taxonomic scope" value="Eukaryota"/>
</dbReference>
<dbReference type="InParanoid" id="Q6NLF7"/>
<dbReference type="PhylomeDB" id="Q6NLF7"/>
<dbReference type="PRO" id="PR:Q6NLF7"/>
<dbReference type="Proteomes" id="UP000006548">
    <property type="component" value="Chromosome 1"/>
</dbReference>
<dbReference type="ExpressionAtlas" id="Q6NLF7">
    <property type="expression patterns" value="baseline and differential"/>
</dbReference>
<dbReference type="GO" id="GO:0005886">
    <property type="term" value="C:plasma membrane"/>
    <property type="evidence" value="ECO:0007669"/>
    <property type="project" value="UniProtKB-SubCell"/>
</dbReference>
<dbReference type="GO" id="GO:0098552">
    <property type="term" value="C:side of membrane"/>
    <property type="evidence" value="ECO:0007669"/>
    <property type="project" value="UniProtKB-KW"/>
</dbReference>
<dbReference type="CDD" id="cd00010">
    <property type="entry name" value="AAI_LTSS"/>
    <property type="match status" value="1"/>
</dbReference>
<dbReference type="FunFam" id="1.10.110.10:FF:000012">
    <property type="entry name" value="F23N19.16"/>
    <property type="match status" value="1"/>
</dbReference>
<dbReference type="Gene3D" id="1.10.110.10">
    <property type="entry name" value="Plant lipid-transfer and hydrophobic proteins"/>
    <property type="match status" value="1"/>
</dbReference>
<dbReference type="InterPro" id="IPR036312">
    <property type="entry name" value="Bifun_inhib/LTP/seed_sf"/>
</dbReference>
<dbReference type="InterPro" id="IPR016140">
    <property type="entry name" value="Bifunc_inhib/LTP/seed_store"/>
</dbReference>
<dbReference type="InterPro" id="IPR043325">
    <property type="entry name" value="LTSS"/>
</dbReference>
<dbReference type="PANTHER" id="PTHR33044">
    <property type="entry name" value="BIFUNCTIONAL INHIBITOR/LIPID-TRANSFER PROTEIN/SEED STORAGE 2S ALBUMIN SUPERFAMILY PROTEIN-RELATED"/>
    <property type="match status" value="1"/>
</dbReference>
<dbReference type="Pfam" id="PF14368">
    <property type="entry name" value="LTP_2"/>
    <property type="match status" value="1"/>
</dbReference>
<dbReference type="SUPFAM" id="SSF47699">
    <property type="entry name" value="Bifunctional inhibitor/lipid-transfer protein/seed storage 2S albumin"/>
    <property type="match status" value="1"/>
</dbReference>
<sequence length="150" mass="15711">MTKTMMIFAAAMTVMALLLVPTIEAQTECVSKLVPCFNDLNTTTTPVKECCDSIKEAVEKELTCLCTIYTSPGLLAQFNVTTEKALGLSRRCNVTTDLSACTAKGAPSPKASLPPPAPAGNTKKDAGAGNKLAGYGVTTVILSLISSIFF</sequence>
<comment type="function">
    <text evidence="2">Probable lipid transfer protein.</text>
</comment>
<comment type="subcellular location">
    <subcellularLocation>
        <location evidence="3">Cell membrane</location>
        <topology evidence="3">Lipid-anchor</topology>
        <topology evidence="3">GPI-anchor</topology>
    </subcellularLocation>
</comment>
<comment type="tissue specificity">
    <text evidence="6">Up-regulated in the epidermis of stems.</text>
</comment>
<comment type="similarity">
    <text evidence="8">Belongs to the plant LTP family.</text>
</comment>
<comment type="sequence caution" evidence="8">
    <conflict type="erroneous gene model prediction">
        <sequence resource="EMBL-CDS" id="AAF19539"/>
    </conflict>
</comment>
<keyword id="KW-1003">Cell membrane</keyword>
<keyword id="KW-1015">Disulfide bond</keyword>
<keyword id="KW-0325">Glycoprotein</keyword>
<keyword id="KW-0336">GPI-anchor</keyword>
<keyword id="KW-0449">Lipoprotein</keyword>
<keyword id="KW-0472">Membrane</keyword>
<keyword id="KW-1185">Reference proteome</keyword>
<keyword id="KW-0732">Signal</keyword>
<gene>
    <name evidence="7" type="primary">LTPG7</name>
    <name evidence="9" type="ordered locus">At1g62790</name>
    <name evidence="10" type="ORF">F23N19.16</name>
</gene>
<reference key="1">
    <citation type="journal article" date="2000" name="Nature">
        <title>Sequence and analysis of chromosome 1 of the plant Arabidopsis thaliana.</title>
        <authorList>
            <person name="Theologis A."/>
            <person name="Ecker J.R."/>
            <person name="Palm C.J."/>
            <person name="Federspiel N.A."/>
            <person name="Kaul S."/>
            <person name="White O."/>
            <person name="Alonso J."/>
            <person name="Altafi H."/>
            <person name="Araujo R."/>
            <person name="Bowman C.L."/>
            <person name="Brooks S.Y."/>
            <person name="Buehler E."/>
            <person name="Chan A."/>
            <person name="Chao Q."/>
            <person name="Chen H."/>
            <person name="Cheuk R.F."/>
            <person name="Chin C.W."/>
            <person name="Chung M.K."/>
            <person name="Conn L."/>
            <person name="Conway A.B."/>
            <person name="Conway A.R."/>
            <person name="Creasy T.H."/>
            <person name="Dewar K."/>
            <person name="Dunn P."/>
            <person name="Etgu P."/>
            <person name="Feldblyum T.V."/>
            <person name="Feng J.-D."/>
            <person name="Fong B."/>
            <person name="Fujii C.Y."/>
            <person name="Gill J.E."/>
            <person name="Goldsmith A.D."/>
            <person name="Haas B."/>
            <person name="Hansen N.F."/>
            <person name="Hughes B."/>
            <person name="Huizar L."/>
            <person name="Hunter J.L."/>
            <person name="Jenkins J."/>
            <person name="Johnson-Hopson C."/>
            <person name="Khan S."/>
            <person name="Khaykin E."/>
            <person name="Kim C.J."/>
            <person name="Koo H.L."/>
            <person name="Kremenetskaia I."/>
            <person name="Kurtz D.B."/>
            <person name="Kwan A."/>
            <person name="Lam B."/>
            <person name="Langin-Hooper S."/>
            <person name="Lee A."/>
            <person name="Lee J.M."/>
            <person name="Lenz C.A."/>
            <person name="Li J.H."/>
            <person name="Li Y.-P."/>
            <person name="Lin X."/>
            <person name="Liu S.X."/>
            <person name="Liu Z.A."/>
            <person name="Luros J.S."/>
            <person name="Maiti R."/>
            <person name="Marziali A."/>
            <person name="Militscher J."/>
            <person name="Miranda M."/>
            <person name="Nguyen M."/>
            <person name="Nierman W.C."/>
            <person name="Osborne B.I."/>
            <person name="Pai G."/>
            <person name="Peterson J."/>
            <person name="Pham P.K."/>
            <person name="Rizzo M."/>
            <person name="Rooney T."/>
            <person name="Rowley D."/>
            <person name="Sakano H."/>
            <person name="Salzberg S.L."/>
            <person name="Schwartz J.R."/>
            <person name="Shinn P."/>
            <person name="Southwick A.M."/>
            <person name="Sun H."/>
            <person name="Tallon L.J."/>
            <person name="Tambunga G."/>
            <person name="Toriumi M.J."/>
            <person name="Town C.D."/>
            <person name="Utterback T."/>
            <person name="Van Aken S."/>
            <person name="Vaysberg M."/>
            <person name="Vysotskaia V.S."/>
            <person name="Walker M."/>
            <person name="Wu D."/>
            <person name="Yu G."/>
            <person name="Fraser C.M."/>
            <person name="Venter J.C."/>
            <person name="Davis R.W."/>
        </authorList>
    </citation>
    <scope>NUCLEOTIDE SEQUENCE [LARGE SCALE GENOMIC DNA]</scope>
    <source>
        <strain>cv. Columbia</strain>
    </source>
</reference>
<reference key="2">
    <citation type="journal article" date="2017" name="Plant J.">
        <title>Araport11: a complete reannotation of the Arabidopsis thaliana reference genome.</title>
        <authorList>
            <person name="Cheng C.Y."/>
            <person name="Krishnakumar V."/>
            <person name="Chan A.P."/>
            <person name="Thibaud-Nissen F."/>
            <person name="Schobel S."/>
            <person name="Town C.D."/>
        </authorList>
    </citation>
    <scope>GENOME REANNOTATION</scope>
    <source>
        <strain>cv. Columbia</strain>
    </source>
</reference>
<reference key="3">
    <citation type="submission" date="2004-04" db="EMBL/GenBank/DDBJ databases">
        <title>Arabidopsis ORF clones.</title>
        <authorList>
            <person name="Shinn P."/>
            <person name="Chen H."/>
            <person name="Cheuk R.F."/>
            <person name="Kim C.J."/>
            <person name="Ecker J.R."/>
        </authorList>
    </citation>
    <scope>NUCLEOTIDE SEQUENCE [LARGE SCALE MRNA]</scope>
    <source>
        <strain>cv. Columbia</strain>
    </source>
</reference>
<reference key="4">
    <citation type="submission" date="2006-07" db="EMBL/GenBank/DDBJ databases">
        <title>Large-scale analysis of RIKEN Arabidopsis full-length (RAFL) cDNAs.</title>
        <authorList>
            <person name="Totoki Y."/>
            <person name="Seki M."/>
            <person name="Ishida J."/>
            <person name="Nakajima M."/>
            <person name="Enju A."/>
            <person name="Kamiya A."/>
            <person name="Narusaka M."/>
            <person name="Shin-i T."/>
            <person name="Nakagawa M."/>
            <person name="Sakamoto N."/>
            <person name="Oishi K."/>
            <person name="Kohara Y."/>
            <person name="Kobayashi M."/>
            <person name="Toyoda A."/>
            <person name="Sakaki Y."/>
            <person name="Sakurai T."/>
            <person name="Iida K."/>
            <person name="Akiyama K."/>
            <person name="Satou M."/>
            <person name="Toyoda T."/>
            <person name="Konagaya A."/>
            <person name="Carninci P."/>
            <person name="Kawai J."/>
            <person name="Hayashizaki Y."/>
            <person name="Shinozaki K."/>
        </authorList>
    </citation>
    <scope>NUCLEOTIDE SEQUENCE [LARGE SCALE MRNA]</scope>
    <source>
        <strain>cv. Columbia</strain>
    </source>
</reference>
<reference key="5">
    <citation type="journal article" date="2005" name="Plant Physiol.">
        <title>Cuticular lipid composition, surface structure, and gene expression in Arabidopsis stem epidermis.</title>
        <authorList>
            <person name="Suh M.C."/>
            <person name="Samuels A.L."/>
            <person name="Jetter R."/>
            <person name="Kunst L."/>
            <person name="Pollard M."/>
            <person name="Ohlrogge J."/>
            <person name="Beisson F."/>
        </authorList>
    </citation>
    <scope>TISSUE SPECIFICITY</scope>
    <source>
        <strain>cv. Columbia</strain>
    </source>
</reference>
<reference key="6">
    <citation type="journal article" date="2013" name="Plant Mol. Biol.">
        <title>Coexpression patterns indicate that GPI-anchored non-specific lipid transfer proteins are involved in accumulation of cuticular wax, suberin and sporopollenin.</title>
        <authorList>
            <person name="Edstam M.M."/>
            <person name="Blomqvist K."/>
            <person name="Ekloef A."/>
            <person name="Wennergren U."/>
            <person name="Edqvist J."/>
        </authorList>
    </citation>
    <scope>GENE FAMILY</scope>
    <scope>NOMENCLATURE</scope>
    <source>
        <strain>cv. Columbia</strain>
    </source>
</reference>
<proteinExistence type="evidence at transcript level"/>
<protein>
    <recommendedName>
        <fullName evidence="7">Non-specific lipid transfer protein GPI-anchored 7</fullName>
        <shortName evidence="7">AtLTPG-7</shortName>
        <shortName evidence="7">Protein LTP-GPI-ANCHORED 7</shortName>
    </recommendedName>
</protein>
<name>LTPG7_ARATH</name>
<organism>
    <name type="scientific">Arabidopsis thaliana</name>
    <name type="common">Mouse-ear cress</name>
    <dbReference type="NCBI Taxonomy" id="3702"/>
    <lineage>
        <taxon>Eukaryota</taxon>
        <taxon>Viridiplantae</taxon>
        <taxon>Streptophyta</taxon>
        <taxon>Embryophyta</taxon>
        <taxon>Tracheophyta</taxon>
        <taxon>Spermatophyta</taxon>
        <taxon>Magnoliopsida</taxon>
        <taxon>eudicotyledons</taxon>
        <taxon>Gunneridae</taxon>
        <taxon>Pentapetalae</taxon>
        <taxon>rosids</taxon>
        <taxon>malvids</taxon>
        <taxon>Brassicales</taxon>
        <taxon>Brassicaceae</taxon>
        <taxon>Camelineae</taxon>
        <taxon>Arabidopsis</taxon>
    </lineage>
</organism>
<feature type="signal peptide" evidence="3">
    <location>
        <begin position="1"/>
        <end position="25"/>
    </location>
</feature>
<feature type="chain" id="PRO_5014310543" description="Non-specific lipid transfer protein GPI-anchored 7">
    <location>
        <begin position="26"/>
        <end position="125"/>
    </location>
</feature>
<feature type="propeptide" id="PRO_0000451641" description="Removed in mature form" evidence="3">
    <location>
        <begin position="126"/>
        <end position="150"/>
    </location>
</feature>
<feature type="region of interest" description="Disordered" evidence="5">
    <location>
        <begin position="103"/>
        <end position="125"/>
    </location>
</feature>
<feature type="lipid moiety-binding region" description="GPI-anchor amidated aspartate" evidence="3">
    <location>
        <position position="125"/>
    </location>
</feature>
<feature type="glycosylation site" description="N-linked (GlcNAc...) asparagine" evidence="4">
    <location>
        <position position="41"/>
    </location>
</feature>
<feature type="glycosylation site" description="N-linked (GlcNAc...) asparagine" evidence="4">
    <location>
        <position position="79"/>
    </location>
</feature>
<feature type="glycosylation site" description="N-linked (GlcNAc...) asparagine" evidence="4">
    <location>
        <position position="93"/>
    </location>
</feature>
<feature type="disulfide bond" evidence="1">
    <location>
        <begin position="29"/>
        <end position="66"/>
    </location>
</feature>
<feature type="disulfide bond" evidence="1">
    <location>
        <begin position="36"/>
        <end position="50"/>
    </location>
</feature>
<feature type="disulfide bond" evidence="1">
    <location>
        <begin position="51"/>
        <end position="92"/>
    </location>
</feature>
<feature type="disulfide bond" evidence="1">
    <location>
        <begin position="64"/>
        <end position="101"/>
    </location>
</feature>